<keyword id="KW-0131">Cell cycle</keyword>
<keyword id="KW-0132">Cell division</keyword>
<keyword id="KW-0342">GTP-binding</keyword>
<keyword id="KW-0460">Magnesium</keyword>
<keyword id="KW-0479">Metal-binding</keyword>
<keyword id="KW-0547">Nucleotide-binding</keyword>
<keyword id="KW-1185">Reference proteome</keyword>
<keyword id="KW-0717">Septation</keyword>
<comment type="function">
    <text evidence="1">Necessary for normal cell division and for the maintenance of normal septation.</text>
</comment>
<comment type="cofactor">
    <cofactor evidence="1">
        <name>Mg(2+)</name>
        <dbReference type="ChEBI" id="CHEBI:18420"/>
    </cofactor>
</comment>
<comment type="similarity">
    <text evidence="1">Belongs to the TRAFAC class TrmE-Era-EngA-EngB-Septin-like GTPase superfamily. EngB GTPase family.</text>
</comment>
<accession>Q1WUI3</accession>
<dbReference type="EMBL" id="CP000233">
    <property type="protein sequence ID" value="ABD99352.1"/>
    <property type="molecule type" value="Genomic_DNA"/>
</dbReference>
<dbReference type="RefSeq" id="YP_535435.1">
    <property type="nucleotide sequence ID" value="NC_007929.1"/>
</dbReference>
<dbReference type="SMR" id="Q1WUI3"/>
<dbReference type="STRING" id="362948.LSL_0543"/>
<dbReference type="KEGG" id="lsl:LSL_0543"/>
<dbReference type="PATRIC" id="fig|362948.14.peg.621"/>
<dbReference type="HOGENOM" id="CLU_033732_3_0_9"/>
<dbReference type="OrthoDB" id="9804921at2"/>
<dbReference type="Proteomes" id="UP000006559">
    <property type="component" value="Chromosome"/>
</dbReference>
<dbReference type="GO" id="GO:0005829">
    <property type="term" value="C:cytosol"/>
    <property type="evidence" value="ECO:0007669"/>
    <property type="project" value="TreeGrafter"/>
</dbReference>
<dbReference type="GO" id="GO:0005525">
    <property type="term" value="F:GTP binding"/>
    <property type="evidence" value="ECO:0007669"/>
    <property type="project" value="UniProtKB-UniRule"/>
</dbReference>
<dbReference type="GO" id="GO:0046872">
    <property type="term" value="F:metal ion binding"/>
    <property type="evidence" value="ECO:0007669"/>
    <property type="project" value="UniProtKB-KW"/>
</dbReference>
<dbReference type="GO" id="GO:0000917">
    <property type="term" value="P:division septum assembly"/>
    <property type="evidence" value="ECO:0007669"/>
    <property type="project" value="UniProtKB-KW"/>
</dbReference>
<dbReference type="CDD" id="cd01876">
    <property type="entry name" value="YihA_EngB"/>
    <property type="match status" value="1"/>
</dbReference>
<dbReference type="FunFam" id="3.40.50.300:FF:000098">
    <property type="entry name" value="Probable GTP-binding protein EngB"/>
    <property type="match status" value="1"/>
</dbReference>
<dbReference type="Gene3D" id="3.40.50.300">
    <property type="entry name" value="P-loop containing nucleotide triphosphate hydrolases"/>
    <property type="match status" value="1"/>
</dbReference>
<dbReference type="HAMAP" id="MF_00321">
    <property type="entry name" value="GTPase_EngB"/>
    <property type="match status" value="1"/>
</dbReference>
<dbReference type="InterPro" id="IPR030393">
    <property type="entry name" value="G_ENGB_dom"/>
</dbReference>
<dbReference type="InterPro" id="IPR006073">
    <property type="entry name" value="GTP-bd"/>
</dbReference>
<dbReference type="InterPro" id="IPR019987">
    <property type="entry name" value="GTP-bd_ribosome_bio_YsxC"/>
</dbReference>
<dbReference type="InterPro" id="IPR027417">
    <property type="entry name" value="P-loop_NTPase"/>
</dbReference>
<dbReference type="InterPro" id="IPR005225">
    <property type="entry name" value="Small_GTP-bd"/>
</dbReference>
<dbReference type="NCBIfam" id="TIGR03598">
    <property type="entry name" value="GTPase_YsxC"/>
    <property type="match status" value="1"/>
</dbReference>
<dbReference type="NCBIfam" id="TIGR00231">
    <property type="entry name" value="small_GTP"/>
    <property type="match status" value="1"/>
</dbReference>
<dbReference type="PANTHER" id="PTHR11649:SF13">
    <property type="entry name" value="ENGB-TYPE G DOMAIN-CONTAINING PROTEIN"/>
    <property type="match status" value="1"/>
</dbReference>
<dbReference type="PANTHER" id="PTHR11649">
    <property type="entry name" value="MSS1/TRME-RELATED GTP-BINDING PROTEIN"/>
    <property type="match status" value="1"/>
</dbReference>
<dbReference type="Pfam" id="PF01926">
    <property type="entry name" value="MMR_HSR1"/>
    <property type="match status" value="1"/>
</dbReference>
<dbReference type="SUPFAM" id="SSF52540">
    <property type="entry name" value="P-loop containing nucleoside triphosphate hydrolases"/>
    <property type="match status" value="1"/>
</dbReference>
<dbReference type="PROSITE" id="PS51706">
    <property type="entry name" value="G_ENGB"/>
    <property type="match status" value="1"/>
</dbReference>
<name>ENGB_LIGS1</name>
<proteinExistence type="inferred from homology"/>
<sequence>MQVHNVNLTISAVRPEQYPDAKLPEVALAGRSNVGKSSLINTLINRRNYARTSSQPGKTQTLNFYNIEDLLYFVDVPGYGYAKVSQKEREKWARMIETYFSTRQELKGAISLVDARHEPSELDCQMIEFLHYYNIPVLVVGTKIDKIPKSKRNKSESQIRKKLQLTKNDRLILFSAVDKIGKDEVWNWIESITKVN</sequence>
<reference key="1">
    <citation type="journal article" date="2006" name="Proc. Natl. Acad. Sci. U.S.A.">
        <title>Multireplicon genome architecture of Lactobacillus salivarius.</title>
        <authorList>
            <person name="Claesson M.J."/>
            <person name="Li Y."/>
            <person name="Leahy S."/>
            <person name="Canchaya C."/>
            <person name="van Pijkeren J.P."/>
            <person name="Cerdeno-Tarraga A.M."/>
            <person name="Parkhill J."/>
            <person name="Flynn S."/>
            <person name="O'Sullivan G.C."/>
            <person name="Collins J.K."/>
            <person name="Higgins D."/>
            <person name="Shanahan F."/>
            <person name="Fitzgerald G.F."/>
            <person name="van Sinderen D."/>
            <person name="O'Toole P.W."/>
        </authorList>
    </citation>
    <scope>NUCLEOTIDE SEQUENCE [LARGE SCALE GENOMIC DNA]</scope>
    <source>
        <strain>UCC118</strain>
    </source>
</reference>
<feature type="chain" id="PRO_0000266882" description="Probable GTP-binding protein EngB">
    <location>
        <begin position="1"/>
        <end position="196"/>
    </location>
</feature>
<feature type="domain" description="EngB-type G" evidence="1">
    <location>
        <begin position="22"/>
        <end position="195"/>
    </location>
</feature>
<feature type="binding site" evidence="1">
    <location>
        <begin position="30"/>
        <end position="37"/>
    </location>
    <ligand>
        <name>GTP</name>
        <dbReference type="ChEBI" id="CHEBI:37565"/>
    </ligand>
</feature>
<feature type="binding site" evidence="1">
    <location>
        <position position="37"/>
    </location>
    <ligand>
        <name>Mg(2+)</name>
        <dbReference type="ChEBI" id="CHEBI:18420"/>
    </ligand>
</feature>
<feature type="binding site" evidence="1">
    <location>
        <begin position="57"/>
        <end position="61"/>
    </location>
    <ligand>
        <name>GTP</name>
        <dbReference type="ChEBI" id="CHEBI:37565"/>
    </ligand>
</feature>
<feature type="binding site" evidence="1">
    <location>
        <position position="59"/>
    </location>
    <ligand>
        <name>Mg(2+)</name>
        <dbReference type="ChEBI" id="CHEBI:18420"/>
    </ligand>
</feature>
<feature type="binding site" evidence="1">
    <location>
        <begin position="75"/>
        <end position="78"/>
    </location>
    <ligand>
        <name>GTP</name>
        <dbReference type="ChEBI" id="CHEBI:37565"/>
    </ligand>
</feature>
<feature type="binding site" evidence="1">
    <location>
        <begin position="142"/>
        <end position="145"/>
    </location>
    <ligand>
        <name>GTP</name>
        <dbReference type="ChEBI" id="CHEBI:37565"/>
    </ligand>
</feature>
<feature type="binding site" evidence="1">
    <location>
        <begin position="174"/>
        <end position="176"/>
    </location>
    <ligand>
        <name>GTP</name>
        <dbReference type="ChEBI" id="CHEBI:37565"/>
    </ligand>
</feature>
<evidence type="ECO:0000255" key="1">
    <source>
        <dbReference type="HAMAP-Rule" id="MF_00321"/>
    </source>
</evidence>
<protein>
    <recommendedName>
        <fullName evidence="1">Probable GTP-binding protein EngB</fullName>
    </recommendedName>
</protein>
<organism>
    <name type="scientific">Ligilactobacillus salivarius (strain UCC118)</name>
    <name type="common">Lactobacillus salivarius</name>
    <dbReference type="NCBI Taxonomy" id="362948"/>
    <lineage>
        <taxon>Bacteria</taxon>
        <taxon>Bacillati</taxon>
        <taxon>Bacillota</taxon>
        <taxon>Bacilli</taxon>
        <taxon>Lactobacillales</taxon>
        <taxon>Lactobacillaceae</taxon>
        <taxon>Ligilactobacillus</taxon>
    </lineage>
</organism>
<gene>
    <name evidence="1" type="primary">engB</name>
    <name type="ordered locus">LSL_0543</name>
</gene>